<gene>
    <name type="primary">ROMT-15</name>
    <name type="synonym">COA20</name>
    <name type="ordered locus">Os08g0498100</name>
    <name type="ordered locus">LOC_Os08g38900</name>
    <name type="ORF">OsJ_27813</name>
    <name type="ORF">P0026F07.24</name>
</gene>
<keyword id="KW-0460">Magnesium</keyword>
<keyword id="KW-0479">Metal-binding</keyword>
<keyword id="KW-0489">Methyltransferase</keyword>
<keyword id="KW-0539">Nucleus</keyword>
<keyword id="KW-1185">Reference proteome</keyword>
<keyword id="KW-0949">S-adenosyl-L-methionine</keyword>
<keyword id="KW-0808">Transferase</keyword>
<accession>Q9XGP7</accession>
<accession>A0A0P0XHD0</accession>
<accession>A3BUH5</accession>
<accession>Q7XXS6</accession>
<proteinExistence type="evidence at protein level"/>
<reference key="1">
    <citation type="journal article" date="2005" name="Plant Cell">
        <title>Functional isolation of novel nuclear proteins showing a variety of subnuclear localizations.</title>
        <authorList>
            <person name="Moriguchi K."/>
            <person name="Suzuki T."/>
            <person name="Ito Y."/>
            <person name="Yamazaki Y."/>
            <person name="Niwa Y."/>
            <person name="Kurata N."/>
        </authorList>
    </citation>
    <scope>NUCLEOTIDE SEQUENCE [MRNA]</scope>
    <scope>SUBCELLULAR LOCATION</scope>
    <source>
        <tissue>Panicle</tissue>
    </source>
</reference>
<reference key="2">
    <citation type="submission" date="2004-06" db="EMBL/GenBank/DDBJ databases">
        <title>Characterization of three rice CCoAOMT genes.</title>
        <authorList>
            <person name="Zhao H.Y."/>
            <person name="Shen Q.X."/>
            <person name="Lv S.Y."/>
            <person name="Wang T."/>
            <person name="Song Y.R."/>
        </authorList>
    </citation>
    <scope>NUCLEOTIDE SEQUENCE [GENOMIC DNA]</scope>
</reference>
<reference key="3">
    <citation type="journal article" date="2005" name="Nature">
        <title>The map-based sequence of the rice genome.</title>
        <authorList>
            <consortium name="International rice genome sequencing project (IRGSP)"/>
        </authorList>
    </citation>
    <scope>NUCLEOTIDE SEQUENCE [LARGE SCALE GENOMIC DNA]</scope>
    <source>
        <strain>cv. Nipponbare</strain>
    </source>
</reference>
<reference key="4">
    <citation type="journal article" date="2008" name="Nucleic Acids Res.">
        <title>The rice annotation project database (RAP-DB): 2008 update.</title>
        <authorList>
            <consortium name="The rice annotation project (RAP)"/>
        </authorList>
    </citation>
    <scope>GENOME REANNOTATION</scope>
    <source>
        <strain>cv. Nipponbare</strain>
    </source>
</reference>
<reference key="5">
    <citation type="journal article" date="2013" name="Rice">
        <title>Improvement of the Oryza sativa Nipponbare reference genome using next generation sequence and optical map data.</title>
        <authorList>
            <person name="Kawahara Y."/>
            <person name="de la Bastide M."/>
            <person name="Hamilton J.P."/>
            <person name="Kanamori H."/>
            <person name="McCombie W.R."/>
            <person name="Ouyang S."/>
            <person name="Schwartz D.C."/>
            <person name="Tanaka T."/>
            <person name="Wu J."/>
            <person name="Zhou S."/>
            <person name="Childs K.L."/>
            <person name="Davidson R.M."/>
            <person name="Lin H."/>
            <person name="Quesada-Ocampo L."/>
            <person name="Vaillancourt B."/>
            <person name="Sakai H."/>
            <person name="Lee S.S."/>
            <person name="Kim J."/>
            <person name="Numa H."/>
            <person name="Itoh T."/>
            <person name="Buell C.R."/>
            <person name="Matsumoto T."/>
        </authorList>
    </citation>
    <scope>GENOME REANNOTATION</scope>
    <source>
        <strain>cv. Nipponbare</strain>
    </source>
</reference>
<reference key="6">
    <citation type="journal article" date="2005" name="PLoS Biol.">
        <title>The genomes of Oryza sativa: a history of duplications.</title>
        <authorList>
            <person name="Yu J."/>
            <person name="Wang J."/>
            <person name="Lin W."/>
            <person name="Li S."/>
            <person name="Li H."/>
            <person name="Zhou J."/>
            <person name="Ni P."/>
            <person name="Dong W."/>
            <person name="Hu S."/>
            <person name="Zeng C."/>
            <person name="Zhang J."/>
            <person name="Zhang Y."/>
            <person name="Li R."/>
            <person name="Xu Z."/>
            <person name="Li S."/>
            <person name="Li X."/>
            <person name="Zheng H."/>
            <person name="Cong L."/>
            <person name="Lin L."/>
            <person name="Yin J."/>
            <person name="Geng J."/>
            <person name="Li G."/>
            <person name="Shi J."/>
            <person name="Liu J."/>
            <person name="Lv H."/>
            <person name="Li J."/>
            <person name="Wang J."/>
            <person name="Deng Y."/>
            <person name="Ran L."/>
            <person name="Shi X."/>
            <person name="Wang X."/>
            <person name="Wu Q."/>
            <person name="Li C."/>
            <person name="Ren X."/>
            <person name="Wang J."/>
            <person name="Wang X."/>
            <person name="Li D."/>
            <person name="Liu D."/>
            <person name="Zhang X."/>
            <person name="Ji Z."/>
            <person name="Zhao W."/>
            <person name="Sun Y."/>
            <person name="Zhang Z."/>
            <person name="Bao J."/>
            <person name="Han Y."/>
            <person name="Dong L."/>
            <person name="Ji J."/>
            <person name="Chen P."/>
            <person name="Wu S."/>
            <person name="Liu J."/>
            <person name="Xiao Y."/>
            <person name="Bu D."/>
            <person name="Tan J."/>
            <person name="Yang L."/>
            <person name="Ye C."/>
            <person name="Zhang J."/>
            <person name="Xu J."/>
            <person name="Zhou Y."/>
            <person name="Yu Y."/>
            <person name="Zhang B."/>
            <person name="Zhuang S."/>
            <person name="Wei H."/>
            <person name="Liu B."/>
            <person name="Lei M."/>
            <person name="Yu H."/>
            <person name="Li Y."/>
            <person name="Xu H."/>
            <person name="Wei S."/>
            <person name="He X."/>
            <person name="Fang L."/>
            <person name="Zhang Z."/>
            <person name="Zhang Y."/>
            <person name="Huang X."/>
            <person name="Su Z."/>
            <person name="Tong W."/>
            <person name="Li J."/>
            <person name="Tong Z."/>
            <person name="Li S."/>
            <person name="Ye J."/>
            <person name="Wang L."/>
            <person name="Fang L."/>
            <person name="Lei T."/>
            <person name="Chen C.-S."/>
            <person name="Chen H.-C."/>
            <person name="Xu Z."/>
            <person name="Li H."/>
            <person name="Huang H."/>
            <person name="Zhang F."/>
            <person name="Xu H."/>
            <person name="Li N."/>
            <person name="Zhao C."/>
            <person name="Li S."/>
            <person name="Dong L."/>
            <person name="Huang Y."/>
            <person name="Li L."/>
            <person name="Xi Y."/>
            <person name="Qi Q."/>
            <person name="Li W."/>
            <person name="Zhang B."/>
            <person name="Hu W."/>
            <person name="Zhang Y."/>
            <person name="Tian X."/>
            <person name="Jiao Y."/>
            <person name="Liang X."/>
            <person name="Jin J."/>
            <person name="Gao L."/>
            <person name="Zheng W."/>
            <person name="Hao B."/>
            <person name="Liu S.-M."/>
            <person name="Wang W."/>
            <person name="Yuan L."/>
            <person name="Cao M."/>
            <person name="McDermott J."/>
            <person name="Samudrala R."/>
            <person name="Wang J."/>
            <person name="Wong G.K.-S."/>
            <person name="Yang H."/>
        </authorList>
    </citation>
    <scope>NUCLEOTIDE SEQUENCE [LARGE SCALE GENOMIC DNA]</scope>
    <source>
        <strain>cv. Nipponbare</strain>
    </source>
</reference>
<reference key="7">
    <citation type="journal article" date="2003" name="Science">
        <title>Collection, mapping, and annotation of over 28,000 cDNA clones from japonica rice.</title>
        <authorList>
            <consortium name="The rice full-length cDNA consortium"/>
        </authorList>
    </citation>
    <scope>NUCLEOTIDE SEQUENCE [LARGE SCALE MRNA]</scope>
    <source>
        <strain>cv. Nipponbare</strain>
    </source>
</reference>
<reference key="8">
    <citation type="journal article" date="2008" name="Planta">
        <title>Cation dependent O-methyltransferases from rice.</title>
        <authorList>
            <person name="Lee Y.J."/>
            <person name="Kim B.G."/>
            <person name="Chong Y."/>
            <person name="Lim Y."/>
            <person name="Ahn J.H."/>
        </authorList>
    </citation>
    <scope>FUNCTION</scope>
    <scope>CATALYTIC ACTIVITY</scope>
    <scope>TISSUE SPECIFICITY</scope>
    <scope>BIOPHYSICOCHEMICAL PROPERTIES</scope>
    <scope>COFACTOR</scope>
    <scope>MUTAGENESIS OF GLU-69; ASP-168; ASP-194 AND ASN-195</scope>
</reference>
<comment type="function">
    <text evidence="3">Catalyzes the stepwise methylation of tricetin to its 3'-mono- and 3',5'-dimethyl ethers. No 3',4',5'-trimethylated ester derivatives are produced. Can use caffeoyl-CoA, 5-hydroxyferulic acid, luteolin, tricetin, quercetin, myrcetin and 7,8-dihydroxyflavone as substrates, but not naringenin, apigenin or kaempferol. The 2,3-double bond and the O-dihydroxyl group of the substrate are both required for catalytic activity of the enzyme.</text>
</comment>
<comment type="catalytic activity">
    <reaction evidence="3">
        <text>tricetin + 2 S-adenosyl-L-methionine = 3',5'-di-O-methyltricetin + 2 S-adenosyl-L-homocysteine + 2 H(+)</text>
        <dbReference type="Rhea" id="RHEA:32347"/>
        <dbReference type="ChEBI" id="CHEBI:15378"/>
        <dbReference type="ChEBI" id="CHEBI:57856"/>
        <dbReference type="ChEBI" id="CHEBI:59789"/>
        <dbReference type="ChEBI" id="CHEBI:60016"/>
        <dbReference type="ChEBI" id="CHEBI:60045"/>
        <dbReference type="EC" id="2.1.1.175"/>
    </reaction>
</comment>
<comment type="cofactor">
    <cofactor evidence="3">
        <name>Mg(2+)</name>
        <dbReference type="ChEBI" id="CHEBI:18420"/>
    </cofactor>
    <cofactor evidence="3">
        <name>Mn(2+)</name>
        <dbReference type="ChEBI" id="CHEBI:29035"/>
    </cofactor>
    <cofactor evidence="3">
        <name>Co(2+)</name>
        <dbReference type="ChEBI" id="CHEBI:48828"/>
    </cofactor>
    <text evidence="3">Binds 1 divalent metal cation per subunit. Fully active with Mg(2+). Active at 80% with Mn(2+) or Co(2+) ions. Active at less than 10% with Ca(2+) or Zn(2+) ions.</text>
</comment>
<comment type="biophysicochemical properties">
    <kinetics>
        <KM evidence="3">72 uM for tricetin</KM>
        <KM evidence="3">90 uM for luteolin</KM>
        <KM evidence="3">80 uM for myricetin</KM>
        <KM evidence="3">76 uM for caffeoyl-CoA</KM>
    </kinetics>
</comment>
<comment type="subcellular location">
    <subcellularLocation>
        <location evidence="2">Nucleus</location>
    </subcellularLocation>
</comment>
<comment type="tissue specificity">
    <text evidence="3">Ubiquitous. Highest expression in stems and roots.</text>
</comment>
<comment type="similarity">
    <text evidence="1">Belongs to the class I-like SAM-binding methyltransferase superfamily. Cation-dependent O-methyltransferase family. CCoAMT subfamily.</text>
</comment>
<comment type="sequence caution" evidence="4">
    <conflict type="erroneous gene model prediction">
        <sequence resource="EMBL-CDS" id="EAZ43214"/>
    </conflict>
</comment>
<protein>
    <recommendedName>
        <fullName>Tricin synthase 1</fullName>
        <ecNumber>2.1.1.175</ecNumber>
    </recommendedName>
    <alternativeName>
        <fullName>Caffeoyl-CoA 3-O-methyltransferase ROMT15</fullName>
    </alternativeName>
</protein>
<organism>
    <name type="scientific">Oryza sativa subsp. japonica</name>
    <name type="common">Rice</name>
    <dbReference type="NCBI Taxonomy" id="39947"/>
    <lineage>
        <taxon>Eukaryota</taxon>
        <taxon>Viridiplantae</taxon>
        <taxon>Streptophyta</taxon>
        <taxon>Embryophyta</taxon>
        <taxon>Tracheophyta</taxon>
        <taxon>Spermatophyta</taxon>
        <taxon>Magnoliopsida</taxon>
        <taxon>Liliopsida</taxon>
        <taxon>Poales</taxon>
        <taxon>Poaceae</taxon>
        <taxon>BOP clade</taxon>
        <taxon>Oryzoideae</taxon>
        <taxon>Oryzeae</taxon>
        <taxon>Oryzinae</taxon>
        <taxon>Oryza</taxon>
        <taxon>Oryza sativa</taxon>
    </lineage>
</organism>
<sequence>MTTGNGDAPVIKNAHSDIDSTNKTLLKSDALYKYVLDTTVLPREPECMRDLRLITDKHQWGFMQSSADEAQLLGMLLKMAGAKRTIEVGVFTGYSLLATALALPEDGKVVAIDPDRESYEIGRPFLEKAGVAHKVDFREGKGLEKLDELLAEEAAAGREAAFDFAFVDADKPNYVKYHEQLLQLVRVGGHIVYDNTLWAGTVALPPDTPLSDLDRRFSVAIRDLNSRLAADPRIDVCQLAIADGITICRRLV</sequence>
<name>OMT15_ORYSJ</name>
<feature type="chain" id="PRO_0000414604" description="Tricin synthase 1">
    <location>
        <begin position="1"/>
        <end position="252"/>
    </location>
</feature>
<feature type="binding site" evidence="1">
    <location>
        <position position="65"/>
    </location>
    <ligand>
        <name>S-adenosyl-L-methionine</name>
        <dbReference type="ChEBI" id="CHEBI:59789"/>
    </ligand>
</feature>
<feature type="binding site" evidence="1">
    <location>
        <position position="87"/>
    </location>
    <ligand>
        <name>S-adenosyl-L-methionine</name>
        <dbReference type="ChEBI" id="CHEBI:59789"/>
    </ligand>
</feature>
<feature type="binding site" evidence="1">
    <location>
        <begin position="89"/>
        <end position="90"/>
    </location>
    <ligand>
        <name>S-adenosyl-L-methionine</name>
        <dbReference type="ChEBI" id="CHEBI:59789"/>
    </ligand>
</feature>
<feature type="binding site" evidence="1">
    <location>
        <position position="95"/>
    </location>
    <ligand>
        <name>S-adenosyl-L-methionine</name>
        <dbReference type="ChEBI" id="CHEBI:59789"/>
    </ligand>
</feature>
<feature type="binding site" evidence="1">
    <location>
        <position position="113"/>
    </location>
    <ligand>
        <name>S-adenosyl-L-methionine</name>
        <dbReference type="ChEBI" id="CHEBI:59789"/>
    </ligand>
</feature>
<feature type="binding site" evidence="1">
    <location>
        <position position="168"/>
    </location>
    <ligand>
        <name>a divalent metal cation</name>
        <dbReference type="ChEBI" id="CHEBI:60240"/>
    </ligand>
</feature>
<feature type="binding site" evidence="1">
    <location>
        <position position="170"/>
    </location>
    <ligand>
        <name>S-adenosyl-L-methionine</name>
        <dbReference type="ChEBI" id="CHEBI:59789"/>
    </ligand>
</feature>
<feature type="binding site" evidence="1">
    <location>
        <position position="194"/>
    </location>
    <ligand>
        <name>a divalent metal cation</name>
        <dbReference type="ChEBI" id="CHEBI:60240"/>
    </ligand>
</feature>
<feature type="binding site" evidence="1">
    <location>
        <position position="195"/>
    </location>
    <ligand>
        <name>a divalent metal cation</name>
        <dbReference type="ChEBI" id="CHEBI:60240"/>
    </ligand>
</feature>
<feature type="mutagenesis site" description="14% loss of activity." evidence="3">
    <original>E</original>
    <variation>L</variation>
    <location>
        <position position="69"/>
    </location>
</feature>
<feature type="mutagenesis site" description="Total loss of activity." evidence="3">
    <original>D</original>
    <variation>L</variation>
    <location>
        <position position="168"/>
    </location>
</feature>
<feature type="mutagenesis site" description="Total loss of activity." evidence="3">
    <original>D</original>
    <variation>L</variation>
    <location>
        <position position="194"/>
    </location>
</feature>
<feature type="mutagenesis site" description="Total loss of activity." evidence="3">
    <original>N</original>
    <variation>L</variation>
    <location>
        <position position="195"/>
    </location>
</feature>
<dbReference type="EC" id="2.1.1.175"/>
<dbReference type="EMBL" id="AB110168">
    <property type="protein sequence ID" value="BAC78560.1"/>
    <property type="molecule type" value="mRNA"/>
</dbReference>
<dbReference type="EMBL" id="AY644637">
    <property type="protein sequence ID" value="AAT68023.1"/>
    <property type="molecule type" value="Genomic_DNA"/>
</dbReference>
<dbReference type="EMBL" id="AP000364">
    <property type="protein sequence ID" value="BAA81774.1"/>
    <property type="molecule type" value="Genomic_DNA"/>
</dbReference>
<dbReference type="EMBL" id="AP008214">
    <property type="protein sequence ID" value="BAF24056.1"/>
    <property type="molecule type" value="Genomic_DNA"/>
</dbReference>
<dbReference type="EMBL" id="AP014964">
    <property type="protein sequence ID" value="BAT06083.1"/>
    <property type="molecule type" value="Genomic_DNA"/>
</dbReference>
<dbReference type="EMBL" id="CM000145">
    <property type="protein sequence ID" value="EAZ43214.1"/>
    <property type="status" value="ALT_SEQ"/>
    <property type="molecule type" value="Genomic_DNA"/>
</dbReference>
<dbReference type="EMBL" id="AK071482">
    <property type="protein sequence ID" value="BAG92518.1"/>
    <property type="molecule type" value="mRNA"/>
</dbReference>
<dbReference type="EMBL" id="AK104326">
    <property type="protein sequence ID" value="BAG96600.1"/>
    <property type="molecule type" value="mRNA"/>
</dbReference>
<dbReference type="EMBL" id="AK104801">
    <property type="protein sequence ID" value="BAG96961.1"/>
    <property type="molecule type" value="mRNA"/>
</dbReference>
<dbReference type="RefSeq" id="XP_015649764.1">
    <property type="nucleotide sequence ID" value="XM_015794278.1"/>
</dbReference>
<dbReference type="SMR" id="Q9XGP7"/>
<dbReference type="FunCoup" id="Q9XGP7">
    <property type="interactions" value="73"/>
</dbReference>
<dbReference type="STRING" id="39947.Q9XGP7"/>
<dbReference type="PaxDb" id="39947-Q9XGP7"/>
<dbReference type="EnsemblPlants" id="Os08t0498100-01">
    <property type="protein sequence ID" value="Os08t0498100-01"/>
    <property type="gene ID" value="Os08g0498100"/>
</dbReference>
<dbReference type="Gramene" id="Os08t0498100-01">
    <property type="protein sequence ID" value="Os08t0498100-01"/>
    <property type="gene ID" value="Os08g0498100"/>
</dbReference>
<dbReference type="KEGG" id="dosa:Os08g0498100"/>
<dbReference type="eggNOG" id="KOG1663">
    <property type="taxonomic scope" value="Eukaryota"/>
</dbReference>
<dbReference type="HOGENOM" id="CLU_067676_5_0_1"/>
<dbReference type="InParanoid" id="Q9XGP7"/>
<dbReference type="OMA" id="ERIEVCQ"/>
<dbReference type="OrthoDB" id="10251242at2759"/>
<dbReference type="BioCyc" id="MetaCyc:MONOMER-20528"/>
<dbReference type="BRENDA" id="2.1.1.104">
    <property type="organism ID" value="4460"/>
</dbReference>
<dbReference type="BRENDA" id="2.1.1.175">
    <property type="organism ID" value="4460"/>
</dbReference>
<dbReference type="BRENDA" id="2.1.1.267">
    <property type="organism ID" value="4460"/>
</dbReference>
<dbReference type="SABIO-RK" id="Q9XGP7"/>
<dbReference type="Proteomes" id="UP000000763">
    <property type="component" value="Chromosome 8"/>
</dbReference>
<dbReference type="Proteomes" id="UP000007752">
    <property type="component" value="Chromosome 8"/>
</dbReference>
<dbReference type="Proteomes" id="UP000059680">
    <property type="component" value="Chromosome 8"/>
</dbReference>
<dbReference type="GO" id="GO:0005634">
    <property type="term" value="C:nucleus"/>
    <property type="evidence" value="ECO:0000314"/>
    <property type="project" value="UniProtKB"/>
</dbReference>
<dbReference type="GO" id="GO:0046872">
    <property type="term" value="F:metal ion binding"/>
    <property type="evidence" value="ECO:0007669"/>
    <property type="project" value="UniProtKB-KW"/>
</dbReference>
<dbReference type="GO" id="GO:0008171">
    <property type="term" value="F:O-methyltransferase activity"/>
    <property type="evidence" value="ECO:0007669"/>
    <property type="project" value="InterPro"/>
</dbReference>
<dbReference type="GO" id="GO:0008757">
    <property type="term" value="F:S-adenosylmethionine-dependent methyltransferase activity"/>
    <property type="evidence" value="ECO:0000314"/>
    <property type="project" value="UniProtKB"/>
</dbReference>
<dbReference type="GO" id="GO:0032259">
    <property type="term" value="P:methylation"/>
    <property type="evidence" value="ECO:0000314"/>
    <property type="project" value="UniProtKB"/>
</dbReference>
<dbReference type="CDD" id="cd02440">
    <property type="entry name" value="AdoMet_MTases"/>
    <property type="match status" value="1"/>
</dbReference>
<dbReference type="FunFam" id="3.40.50.150:FF:000147">
    <property type="entry name" value="Caffeoyl-CoA O-methyltransferase 1"/>
    <property type="match status" value="1"/>
</dbReference>
<dbReference type="Gene3D" id="3.40.50.150">
    <property type="entry name" value="Vaccinia Virus protein VP39"/>
    <property type="match status" value="1"/>
</dbReference>
<dbReference type="InterPro" id="IPR050362">
    <property type="entry name" value="Cation-dep_OMT"/>
</dbReference>
<dbReference type="InterPro" id="IPR029063">
    <property type="entry name" value="SAM-dependent_MTases_sf"/>
</dbReference>
<dbReference type="InterPro" id="IPR002935">
    <property type="entry name" value="SAM_O-MeTrfase"/>
</dbReference>
<dbReference type="PANTHER" id="PTHR10509">
    <property type="entry name" value="O-METHYLTRANSFERASE-RELATED"/>
    <property type="match status" value="1"/>
</dbReference>
<dbReference type="PANTHER" id="PTHR10509:SF66">
    <property type="entry name" value="TRICIN SYNTHASE 1"/>
    <property type="match status" value="1"/>
</dbReference>
<dbReference type="Pfam" id="PF01596">
    <property type="entry name" value="Methyltransf_3"/>
    <property type="match status" value="1"/>
</dbReference>
<dbReference type="SUPFAM" id="SSF53335">
    <property type="entry name" value="S-adenosyl-L-methionine-dependent methyltransferases"/>
    <property type="match status" value="1"/>
</dbReference>
<dbReference type="PROSITE" id="PS51682">
    <property type="entry name" value="SAM_OMT_I"/>
    <property type="match status" value="1"/>
</dbReference>
<evidence type="ECO:0000255" key="1">
    <source>
        <dbReference type="PROSITE-ProRule" id="PRU01019"/>
    </source>
</evidence>
<evidence type="ECO:0000269" key="2">
    <source>
    </source>
</evidence>
<evidence type="ECO:0000269" key="3">
    <source>
    </source>
</evidence>
<evidence type="ECO:0000305" key="4"/>